<feature type="chain" id="PRO_0000102284" description="Lipoyl synthase">
    <location>
        <begin position="1"/>
        <end position="276"/>
    </location>
</feature>
<feature type="domain" description="Radical SAM core" evidence="2">
    <location>
        <begin position="39"/>
        <end position="255"/>
    </location>
</feature>
<feature type="binding site" evidence="1">
    <location>
        <position position="27"/>
    </location>
    <ligand>
        <name>[4Fe-4S] cluster</name>
        <dbReference type="ChEBI" id="CHEBI:49883"/>
        <label>1</label>
    </ligand>
</feature>
<feature type="binding site" evidence="1">
    <location>
        <position position="32"/>
    </location>
    <ligand>
        <name>[4Fe-4S] cluster</name>
        <dbReference type="ChEBI" id="CHEBI:49883"/>
        <label>1</label>
    </ligand>
</feature>
<feature type="binding site" evidence="1">
    <location>
        <position position="38"/>
    </location>
    <ligand>
        <name>[4Fe-4S] cluster</name>
        <dbReference type="ChEBI" id="CHEBI:49883"/>
        <label>1</label>
    </ligand>
</feature>
<feature type="binding site" evidence="1">
    <location>
        <position position="53"/>
    </location>
    <ligand>
        <name>[4Fe-4S] cluster</name>
        <dbReference type="ChEBI" id="CHEBI:49883"/>
        <label>2</label>
        <note>4Fe-4S-S-AdoMet</note>
    </ligand>
</feature>
<feature type="binding site" evidence="1">
    <location>
        <position position="57"/>
    </location>
    <ligand>
        <name>[4Fe-4S] cluster</name>
        <dbReference type="ChEBI" id="CHEBI:49883"/>
        <label>2</label>
        <note>4Fe-4S-S-AdoMet</note>
    </ligand>
</feature>
<feature type="binding site" evidence="1">
    <location>
        <position position="60"/>
    </location>
    <ligand>
        <name>[4Fe-4S] cluster</name>
        <dbReference type="ChEBI" id="CHEBI:49883"/>
        <label>2</label>
        <note>4Fe-4S-S-AdoMet</note>
    </ligand>
</feature>
<feature type="binding site" evidence="1">
    <location>
        <position position="266"/>
    </location>
    <ligand>
        <name>[4Fe-4S] cluster</name>
        <dbReference type="ChEBI" id="CHEBI:49883"/>
        <label>1</label>
    </ligand>
</feature>
<sequence length="276" mass="31785">MMKPVLHFSKLYEVKKLLRKSRLYTVCEESRCPNISECFGNKTATFMILGNRCTRRCAFCNVEKGFPKGVDPEEPYRLLEAVKTLGLKYVVITSVTRDDLPDGGASHFAKCIRVLKENIEDIKVEVLIPDFRGNKKALEVVLKEKPVVLNHNVETVPRLYPSVRIGANYKRSLNILKWSKEIDKSVYTKSALILGFGERKEEVIKVMEDLRSVDCDFLVLGQYYQPSLKHHPVVKYYSEEEFKEFEEIGYEMGFKFVVSKPNARSSYKAFESLLST</sequence>
<name>LIPA_AQUAE</name>
<gene>
    <name evidence="1" type="primary">lipA</name>
    <name type="ordered locus">aq_1355</name>
</gene>
<evidence type="ECO:0000255" key="1">
    <source>
        <dbReference type="HAMAP-Rule" id="MF_00206"/>
    </source>
</evidence>
<evidence type="ECO:0000255" key="2">
    <source>
        <dbReference type="PROSITE-ProRule" id="PRU01266"/>
    </source>
</evidence>
<reference key="1">
    <citation type="journal article" date="1998" name="Nature">
        <title>The complete genome of the hyperthermophilic bacterium Aquifex aeolicus.</title>
        <authorList>
            <person name="Deckert G."/>
            <person name="Warren P.V."/>
            <person name="Gaasterland T."/>
            <person name="Young W.G."/>
            <person name="Lenox A.L."/>
            <person name="Graham D.E."/>
            <person name="Overbeek R."/>
            <person name="Snead M.A."/>
            <person name="Keller M."/>
            <person name="Aujay M."/>
            <person name="Huber R."/>
            <person name="Feldman R.A."/>
            <person name="Short J.M."/>
            <person name="Olsen G.J."/>
            <person name="Swanson R.V."/>
        </authorList>
    </citation>
    <scope>NUCLEOTIDE SEQUENCE [LARGE SCALE GENOMIC DNA]</scope>
    <source>
        <strain>VF5</strain>
    </source>
</reference>
<protein>
    <recommendedName>
        <fullName evidence="1">Lipoyl synthase</fullName>
        <ecNumber evidence="1">2.8.1.8</ecNumber>
    </recommendedName>
    <alternativeName>
        <fullName evidence="1">Lip-syn</fullName>
        <shortName evidence="1">LS</shortName>
    </alternativeName>
    <alternativeName>
        <fullName evidence="1">Lipoate synthase</fullName>
    </alternativeName>
    <alternativeName>
        <fullName evidence="1">Lipoic acid synthase</fullName>
    </alternativeName>
    <alternativeName>
        <fullName evidence="1">Sulfur insertion protein LipA</fullName>
    </alternativeName>
</protein>
<organism>
    <name type="scientific">Aquifex aeolicus (strain VF5)</name>
    <dbReference type="NCBI Taxonomy" id="224324"/>
    <lineage>
        <taxon>Bacteria</taxon>
        <taxon>Pseudomonadati</taxon>
        <taxon>Aquificota</taxon>
        <taxon>Aquificia</taxon>
        <taxon>Aquificales</taxon>
        <taxon>Aquificaceae</taxon>
        <taxon>Aquifex</taxon>
    </lineage>
</organism>
<dbReference type="EC" id="2.8.1.8" evidence="1"/>
<dbReference type="EMBL" id="AE000657">
    <property type="protein sequence ID" value="AAC07325.1"/>
    <property type="molecule type" value="Genomic_DNA"/>
</dbReference>
<dbReference type="PIR" id="E70417">
    <property type="entry name" value="E70417"/>
</dbReference>
<dbReference type="RefSeq" id="NP_213932.1">
    <property type="nucleotide sequence ID" value="NC_000918.1"/>
</dbReference>
<dbReference type="RefSeq" id="WP_010880870.1">
    <property type="nucleotide sequence ID" value="NC_000918.1"/>
</dbReference>
<dbReference type="SMR" id="O67368"/>
<dbReference type="FunCoup" id="O67368">
    <property type="interactions" value="467"/>
</dbReference>
<dbReference type="STRING" id="224324.aq_1355"/>
<dbReference type="EnsemblBacteria" id="AAC07325">
    <property type="protein sequence ID" value="AAC07325"/>
    <property type="gene ID" value="aq_1355"/>
</dbReference>
<dbReference type="KEGG" id="aae:aq_1355"/>
<dbReference type="PATRIC" id="fig|224324.8.peg.1059"/>
<dbReference type="eggNOG" id="COG0320">
    <property type="taxonomic scope" value="Bacteria"/>
</dbReference>
<dbReference type="HOGENOM" id="CLU_033144_2_1_0"/>
<dbReference type="InParanoid" id="O67368"/>
<dbReference type="OrthoDB" id="9787898at2"/>
<dbReference type="UniPathway" id="UPA00538">
    <property type="reaction ID" value="UER00593"/>
</dbReference>
<dbReference type="Proteomes" id="UP000000798">
    <property type="component" value="Chromosome"/>
</dbReference>
<dbReference type="GO" id="GO:0005737">
    <property type="term" value="C:cytoplasm"/>
    <property type="evidence" value="ECO:0007669"/>
    <property type="project" value="UniProtKB-SubCell"/>
</dbReference>
<dbReference type="GO" id="GO:0051539">
    <property type="term" value="F:4 iron, 4 sulfur cluster binding"/>
    <property type="evidence" value="ECO:0007669"/>
    <property type="project" value="UniProtKB-UniRule"/>
</dbReference>
<dbReference type="GO" id="GO:0016992">
    <property type="term" value="F:lipoate synthase activity"/>
    <property type="evidence" value="ECO:0007669"/>
    <property type="project" value="UniProtKB-UniRule"/>
</dbReference>
<dbReference type="GO" id="GO:0046872">
    <property type="term" value="F:metal ion binding"/>
    <property type="evidence" value="ECO:0007669"/>
    <property type="project" value="UniProtKB-KW"/>
</dbReference>
<dbReference type="CDD" id="cd01335">
    <property type="entry name" value="Radical_SAM"/>
    <property type="match status" value="1"/>
</dbReference>
<dbReference type="FunFam" id="3.20.20.70:FF:000040">
    <property type="entry name" value="Lipoyl synthase"/>
    <property type="match status" value="1"/>
</dbReference>
<dbReference type="Gene3D" id="3.20.20.70">
    <property type="entry name" value="Aldolase class I"/>
    <property type="match status" value="1"/>
</dbReference>
<dbReference type="HAMAP" id="MF_00206">
    <property type="entry name" value="Lipoyl_synth"/>
    <property type="match status" value="1"/>
</dbReference>
<dbReference type="InterPro" id="IPR013785">
    <property type="entry name" value="Aldolase_TIM"/>
</dbReference>
<dbReference type="InterPro" id="IPR006638">
    <property type="entry name" value="Elp3/MiaA/NifB-like_rSAM"/>
</dbReference>
<dbReference type="InterPro" id="IPR003698">
    <property type="entry name" value="Lipoyl_synth"/>
</dbReference>
<dbReference type="InterPro" id="IPR007197">
    <property type="entry name" value="rSAM"/>
</dbReference>
<dbReference type="NCBIfam" id="TIGR00510">
    <property type="entry name" value="lipA"/>
    <property type="match status" value="1"/>
</dbReference>
<dbReference type="NCBIfam" id="NF004019">
    <property type="entry name" value="PRK05481.1"/>
    <property type="match status" value="1"/>
</dbReference>
<dbReference type="NCBIfam" id="NF009544">
    <property type="entry name" value="PRK12928.1"/>
    <property type="match status" value="1"/>
</dbReference>
<dbReference type="PANTHER" id="PTHR10949">
    <property type="entry name" value="LIPOYL SYNTHASE"/>
    <property type="match status" value="1"/>
</dbReference>
<dbReference type="PANTHER" id="PTHR10949:SF0">
    <property type="entry name" value="LIPOYL SYNTHASE, MITOCHONDRIAL"/>
    <property type="match status" value="1"/>
</dbReference>
<dbReference type="Pfam" id="PF04055">
    <property type="entry name" value="Radical_SAM"/>
    <property type="match status" value="1"/>
</dbReference>
<dbReference type="PIRSF" id="PIRSF005963">
    <property type="entry name" value="Lipoyl_synth"/>
    <property type="match status" value="1"/>
</dbReference>
<dbReference type="SFLD" id="SFLDF00271">
    <property type="entry name" value="lipoyl_synthase"/>
    <property type="match status" value="1"/>
</dbReference>
<dbReference type="SFLD" id="SFLDS00029">
    <property type="entry name" value="Radical_SAM"/>
    <property type="match status" value="1"/>
</dbReference>
<dbReference type="SMART" id="SM00729">
    <property type="entry name" value="Elp3"/>
    <property type="match status" value="1"/>
</dbReference>
<dbReference type="SUPFAM" id="SSF102114">
    <property type="entry name" value="Radical SAM enzymes"/>
    <property type="match status" value="1"/>
</dbReference>
<dbReference type="PROSITE" id="PS51918">
    <property type="entry name" value="RADICAL_SAM"/>
    <property type="match status" value="1"/>
</dbReference>
<accession>O67368</accession>
<comment type="function">
    <text evidence="1">Catalyzes the radical-mediated insertion of two sulfur atoms into the C-6 and C-8 positions of the octanoyl moiety bound to the lipoyl domains of lipoate-dependent enzymes, thereby converting the octanoylated domains into lipoylated derivatives.</text>
</comment>
<comment type="catalytic activity">
    <reaction evidence="1">
        <text>[[Fe-S] cluster scaffold protein carrying a second [4Fe-4S](2+) cluster] + N(6)-octanoyl-L-lysyl-[protein] + 2 oxidized [2Fe-2S]-[ferredoxin] + 2 S-adenosyl-L-methionine + 4 H(+) = [[Fe-S] cluster scaffold protein] + N(6)-[(R)-dihydrolipoyl]-L-lysyl-[protein] + 4 Fe(3+) + 2 hydrogen sulfide + 2 5'-deoxyadenosine + 2 L-methionine + 2 reduced [2Fe-2S]-[ferredoxin]</text>
        <dbReference type="Rhea" id="RHEA:16585"/>
        <dbReference type="Rhea" id="RHEA-COMP:9928"/>
        <dbReference type="Rhea" id="RHEA-COMP:10000"/>
        <dbReference type="Rhea" id="RHEA-COMP:10001"/>
        <dbReference type="Rhea" id="RHEA-COMP:10475"/>
        <dbReference type="Rhea" id="RHEA-COMP:14568"/>
        <dbReference type="Rhea" id="RHEA-COMP:14569"/>
        <dbReference type="ChEBI" id="CHEBI:15378"/>
        <dbReference type="ChEBI" id="CHEBI:17319"/>
        <dbReference type="ChEBI" id="CHEBI:29034"/>
        <dbReference type="ChEBI" id="CHEBI:29919"/>
        <dbReference type="ChEBI" id="CHEBI:33722"/>
        <dbReference type="ChEBI" id="CHEBI:33737"/>
        <dbReference type="ChEBI" id="CHEBI:33738"/>
        <dbReference type="ChEBI" id="CHEBI:57844"/>
        <dbReference type="ChEBI" id="CHEBI:59789"/>
        <dbReference type="ChEBI" id="CHEBI:78809"/>
        <dbReference type="ChEBI" id="CHEBI:83100"/>
        <dbReference type="EC" id="2.8.1.8"/>
    </reaction>
</comment>
<comment type="cofactor">
    <cofactor evidence="1">
        <name>[4Fe-4S] cluster</name>
        <dbReference type="ChEBI" id="CHEBI:49883"/>
    </cofactor>
    <text evidence="1">Binds 2 [4Fe-4S] clusters per subunit. One cluster is coordinated with 3 cysteines and an exchangeable S-adenosyl-L-methionine.</text>
</comment>
<comment type="pathway">
    <text evidence="1">Protein modification; protein lipoylation via endogenous pathway; protein N(6)-(lipoyl)lysine from octanoyl-[acyl-carrier-protein]: step 2/2.</text>
</comment>
<comment type="subcellular location">
    <subcellularLocation>
        <location evidence="1">Cytoplasm</location>
    </subcellularLocation>
</comment>
<comment type="similarity">
    <text evidence="1">Belongs to the radical SAM superfamily. Lipoyl synthase family.</text>
</comment>
<keyword id="KW-0004">4Fe-4S</keyword>
<keyword id="KW-0963">Cytoplasm</keyword>
<keyword id="KW-0408">Iron</keyword>
<keyword id="KW-0411">Iron-sulfur</keyword>
<keyword id="KW-0479">Metal-binding</keyword>
<keyword id="KW-1185">Reference proteome</keyword>
<keyword id="KW-0949">S-adenosyl-L-methionine</keyword>
<keyword id="KW-0808">Transferase</keyword>
<proteinExistence type="inferred from homology"/>